<feature type="chain" id="PRO_0000148876" description="Aspartyl/glutamyl-tRNA(Asn/Gln) amidotransferase subunit B">
    <location>
        <begin position="1"/>
        <end position="472"/>
    </location>
</feature>
<proteinExistence type="inferred from homology"/>
<keyword id="KW-0067">ATP-binding</keyword>
<keyword id="KW-0436">Ligase</keyword>
<keyword id="KW-0547">Nucleotide-binding</keyword>
<keyword id="KW-0648">Protein biosynthesis</keyword>
<keyword id="KW-1185">Reference proteome</keyword>
<name>GATB_SULAC</name>
<gene>
    <name evidence="1" type="primary">gatB</name>
    <name type="ordered locus">Saci_0700</name>
</gene>
<organism>
    <name type="scientific">Sulfolobus acidocaldarius (strain ATCC 33909 / DSM 639 / JCM 8929 / NBRC 15157 / NCIMB 11770)</name>
    <dbReference type="NCBI Taxonomy" id="330779"/>
    <lineage>
        <taxon>Archaea</taxon>
        <taxon>Thermoproteota</taxon>
        <taxon>Thermoprotei</taxon>
        <taxon>Sulfolobales</taxon>
        <taxon>Sulfolobaceae</taxon>
        <taxon>Sulfolobus</taxon>
    </lineage>
</organism>
<sequence>MVKIGLEVHVHLTSLKTKLFCSCPTEYVGKDPNTITCPVCLGLPGAIPVLNENAVRAAIMVALAINAEIADRVVMVRKHYFYPDMAKNYQISQYDGPGSIAISKGGFIKLRDNKTIRIRRINIEEDPAKIVYPTGSMLTSRYTLLDYNRSGFPLLEIVTEPDMSDPREAREFLEKLRSILEHLGISNPDLEGAMRADANISIEGGERVEIKNIGSPKEVEEALKYEIARQKALVAQGMKVNRETRHWDNAKKVTVLTRSKELEEDYRYFPDPDLPPYTVSFDMIEKIRKELPELPDIRIQRLVKEYGITEYDANVLVIDKSLADLFEETAKNYKNYKKLVNILINDYLRWLNDKNLKPSQSKATTKHLIELLTLLDNGTITIKIAKEILPQIVIEGKMPSEIIKQNSLIAIKDEDYLINVIKEVLSEEKDAVEKAKRDPKVINYLVGKVMKKTSKRADPYIVNELIKKELGI</sequence>
<accession>Q4JAU9</accession>
<comment type="function">
    <text evidence="1">Allows the formation of correctly charged Asn-tRNA(Asn) or Gln-tRNA(Gln) through the transamidation of misacylated Asp-tRNA(Asn) or Glu-tRNA(Gln) in organisms which lack either or both of asparaginyl-tRNA or glutaminyl-tRNA synthetases. The reaction takes place in the presence of glutamine and ATP through an activated phospho-Asp-tRNA(Asn) or phospho-Glu-tRNA(Gln).</text>
</comment>
<comment type="catalytic activity">
    <reaction evidence="1">
        <text>L-glutamyl-tRNA(Gln) + L-glutamine + ATP + H2O = L-glutaminyl-tRNA(Gln) + L-glutamate + ADP + phosphate + H(+)</text>
        <dbReference type="Rhea" id="RHEA:17521"/>
        <dbReference type="Rhea" id="RHEA-COMP:9681"/>
        <dbReference type="Rhea" id="RHEA-COMP:9684"/>
        <dbReference type="ChEBI" id="CHEBI:15377"/>
        <dbReference type="ChEBI" id="CHEBI:15378"/>
        <dbReference type="ChEBI" id="CHEBI:29985"/>
        <dbReference type="ChEBI" id="CHEBI:30616"/>
        <dbReference type="ChEBI" id="CHEBI:43474"/>
        <dbReference type="ChEBI" id="CHEBI:58359"/>
        <dbReference type="ChEBI" id="CHEBI:78520"/>
        <dbReference type="ChEBI" id="CHEBI:78521"/>
        <dbReference type="ChEBI" id="CHEBI:456216"/>
    </reaction>
</comment>
<comment type="catalytic activity">
    <reaction evidence="1">
        <text>L-aspartyl-tRNA(Asn) + L-glutamine + ATP + H2O = L-asparaginyl-tRNA(Asn) + L-glutamate + ADP + phosphate + 2 H(+)</text>
        <dbReference type="Rhea" id="RHEA:14513"/>
        <dbReference type="Rhea" id="RHEA-COMP:9674"/>
        <dbReference type="Rhea" id="RHEA-COMP:9677"/>
        <dbReference type="ChEBI" id="CHEBI:15377"/>
        <dbReference type="ChEBI" id="CHEBI:15378"/>
        <dbReference type="ChEBI" id="CHEBI:29985"/>
        <dbReference type="ChEBI" id="CHEBI:30616"/>
        <dbReference type="ChEBI" id="CHEBI:43474"/>
        <dbReference type="ChEBI" id="CHEBI:58359"/>
        <dbReference type="ChEBI" id="CHEBI:78515"/>
        <dbReference type="ChEBI" id="CHEBI:78516"/>
        <dbReference type="ChEBI" id="CHEBI:456216"/>
    </reaction>
</comment>
<comment type="subunit">
    <text evidence="1">Heterotrimer of A, B and C subunits.</text>
</comment>
<comment type="similarity">
    <text evidence="1">Belongs to the GatB/GatE family. GatB subfamily.</text>
</comment>
<evidence type="ECO:0000255" key="1">
    <source>
        <dbReference type="HAMAP-Rule" id="MF_00121"/>
    </source>
</evidence>
<reference key="1">
    <citation type="journal article" date="2005" name="J. Bacteriol.">
        <title>The genome of Sulfolobus acidocaldarius, a model organism of the Crenarchaeota.</title>
        <authorList>
            <person name="Chen L."/>
            <person name="Bruegger K."/>
            <person name="Skovgaard M."/>
            <person name="Redder P."/>
            <person name="She Q."/>
            <person name="Torarinsson E."/>
            <person name="Greve B."/>
            <person name="Awayez M."/>
            <person name="Zibat A."/>
            <person name="Klenk H.-P."/>
            <person name="Garrett R.A."/>
        </authorList>
    </citation>
    <scope>NUCLEOTIDE SEQUENCE [LARGE SCALE GENOMIC DNA]</scope>
    <source>
        <strain>ATCC 33909 / DSM 639 / JCM 8929 / NBRC 15157 / NCIMB 11770</strain>
    </source>
</reference>
<dbReference type="EC" id="6.3.5.-" evidence="1"/>
<dbReference type="EMBL" id="CP000077">
    <property type="protein sequence ID" value="AAY80080.1"/>
    <property type="molecule type" value="Genomic_DNA"/>
</dbReference>
<dbReference type="RefSeq" id="WP_011277582.1">
    <property type="nucleotide sequence ID" value="NC_007181.1"/>
</dbReference>
<dbReference type="SMR" id="Q4JAU9"/>
<dbReference type="STRING" id="330779.Saci_0700"/>
<dbReference type="GeneID" id="14551215"/>
<dbReference type="GeneID" id="78441042"/>
<dbReference type="KEGG" id="sai:Saci_0700"/>
<dbReference type="PATRIC" id="fig|330779.12.peg.668"/>
<dbReference type="eggNOG" id="arCOG01718">
    <property type="taxonomic scope" value="Archaea"/>
</dbReference>
<dbReference type="HOGENOM" id="CLU_019240_0_1_2"/>
<dbReference type="Proteomes" id="UP000001018">
    <property type="component" value="Chromosome"/>
</dbReference>
<dbReference type="GO" id="GO:0050566">
    <property type="term" value="F:asparaginyl-tRNA synthase (glutamine-hydrolyzing) activity"/>
    <property type="evidence" value="ECO:0007669"/>
    <property type="project" value="RHEA"/>
</dbReference>
<dbReference type="GO" id="GO:0005524">
    <property type="term" value="F:ATP binding"/>
    <property type="evidence" value="ECO:0007669"/>
    <property type="project" value="UniProtKB-KW"/>
</dbReference>
<dbReference type="GO" id="GO:0050567">
    <property type="term" value="F:glutaminyl-tRNA synthase (glutamine-hydrolyzing) activity"/>
    <property type="evidence" value="ECO:0007669"/>
    <property type="project" value="UniProtKB-UniRule"/>
</dbReference>
<dbReference type="GO" id="GO:0070681">
    <property type="term" value="P:glutaminyl-tRNAGln biosynthesis via transamidation"/>
    <property type="evidence" value="ECO:0007669"/>
    <property type="project" value="TreeGrafter"/>
</dbReference>
<dbReference type="GO" id="GO:0006412">
    <property type="term" value="P:translation"/>
    <property type="evidence" value="ECO:0007669"/>
    <property type="project" value="UniProtKB-UniRule"/>
</dbReference>
<dbReference type="FunFam" id="1.10.10.410:FF:000001">
    <property type="entry name" value="Aspartyl/glutamyl-tRNA(Asn/Gln) amidotransferase subunit B"/>
    <property type="match status" value="1"/>
</dbReference>
<dbReference type="Gene3D" id="1.10.10.410">
    <property type="match status" value="1"/>
</dbReference>
<dbReference type="Gene3D" id="1.10.150.380">
    <property type="entry name" value="GatB domain, N-terminal subdomain"/>
    <property type="match status" value="1"/>
</dbReference>
<dbReference type="HAMAP" id="MF_00121">
    <property type="entry name" value="GatB"/>
    <property type="match status" value="1"/>
</dbReference>
<dbReference type="InterPro" id="IPR017959">
    <property type="entry name" value="Asn/Gln-tRNA_amidoTrfase_suB/E"/>
</dbReference>
<dbReference type="InterPro" id="IPR006075">
    <property type="entry name" value="Asn/Gln-tRNA_Trfase_suB/E_cat"/>
</dbReference>
<dbReference type="InterPro" id="IPR018027">
    <property type="entry name" value="Asn/Gln_amidotransferase"/>
</dbReference>
<dbReference type="InterPro" id="IPR003789">
    <property type="entry name" value="Asn/Gln_tRNA_amidoTrase-B-like"/>
</dbReference>
<dbReference type="InterPro" id="IPR004413">
    <property type="entry name" value="GatB"/>
</dbReference>
<dbReference type="InterPro" id="IPR042114">
    <property type="entry name" value="GatB_C_1"/>
</dbReference>
<dbReference type="InterPro" id="IPR023168">
    <property type="entry name" value="GatB_Yqey_C_2"/>
</dbReference>
<dbReference type="InterPro" id="IPR017958">
    <property type="entry name" value="Gln-tRNA_amidoTrfase_suB_CS"/>
</dbReference>
<dbReference type="InterPro" id="IPR014746">
    <property type="entry name" value="Gln_synth/guanido_kin_cat_dom"/>
</dbReference>
<dbReference type="NCBIfam" id="TIGR00133">
    <property type="entry name" value="gatB"/>
    <property type="match status" value="1"/>
</dbReference>
<dbReference type="NCBIfam" id="NF004012">
    <property type="entry name" value="PRK05477.1-2"/>
    <property type="match status" value="1"/>
</dbReference>
<dbReference type="NCBIfam" id="NF004014">
    <property type="entry name" value="PRK05477.1-4"/>
    <property type="match status" value="1"/>
</dbReference>
<dbReference type="PANTHER" id="PTHR11659">
    <property type="entry name" value="GLUTAMYL-TRNA GLN AMIDOTRANSFERASE SUBUNIT B MITOCHONDRIAL AND PROKARYOTIC PET112-RELATED"/>
    <property type="match status" value="1"/>
</dbReference>
<dbReference type="PANTHER" id="PTHR11659:SF0">
    <property type="entry name" value="GLUTAMYL-TRNA(GLN) AMIDOTRANSFERASE SUBUNIT B, MITOCHONDRIAL"/>
    <property type="match status" value="1"/>
</dbReference>
<dbReference type="Pfam" id="PF02934">
    <property type="entry name" value="GatB_N"/>
    <property type="match status" value="1"/>
</dbReference>
<dbReference type="Pfam" id="PF02637">
    <property type="entry name" value="GatB_Yqey"/>
    <property type="match status" value="1"/>
</dbReference>
<dbReference type="SMART" id="SM00845">
    <property type="entry name" value="GatB_Yqey"/>
    <property type="match status" value="1"/>
</dbReference>
<dbReference type="SUPFAM" id="SSF89095">
    <property type="entry name" value="GatB/YqeY motif"/>
    <property type="match status" value="1"/>
</dbReference>
<dbReference type="SUPFAM" id="SSF55931">
    <property type="entry name" value="Glutamine synthetase/guanido kinase"/>
    <property type="match status" value="1"/>
</dbReference>
<dbReference type="PROSITE" id="PS01234">
    <property type="entry name" value="GATB"/>
    <property type="match status" value="1"/>
</dbReference>
<protein>
    <recommendedName>
        <fullName evidence="1">Aspartyl/glutamyl-tRNA(Asn/Gln) amidotransferase subunit B</fullName>
        <shortName evidence="1">Asp/Glu-ADT subunit B</shortName>
        <ecNumber evidence="1">6.3.5.-</ecNumber>
    </recommendedName>
</protein>